<gene>
    <name type="primary">ugl</name>
</gene>
<name>UGL_BACGL</name>
<proteinExistence type="evidence at protein level"/>
<dbReference type="EC" id="3.2.1.179" evidence="1 4"/>
<dbReference type="EMBL" id="AB019619">
    <property type="protein sequence ID" value="BAA84216.1"/>
    <property type="molecule type" value="Genomic_DNA"/>
</dbReference>
<dbReference type="PDB" id="1VD5">
    <property type="method" value="X-ray"/>
    <property type="resolution" value="1.80 A"/>
    <property type="chains" value="A=1-377"/>
</dbReference>
<dbReference type="PDB" id="2AHF">
    <property type="method" value="X-ray"/>
    <property type="resolution" value="1.52 A"/>
    <property type="chains" value="A/B=1-377"/>
</dbReference>
<dbReference type="PDB" id="2AHG">
    <property type="method" value="X-ray"/>
    <property type="resolution" value="1.90 A"/>
    <property type="chains" value="A/B=1-377"/>
</dbReference>
<dbReference type="PDB" id="2D5J">
    <property type="method" value="X-ray"/>
    <property type="resolution" value="1.60 A"/>
    <property type="chains" value="A/B=1-377"/>
</dbReference>
<dbReference type="PDB" id="2FUZ">
    <property type="method" value="X-ray"/>
    <property type="resolution" value="1.80 A"/>
    <property type="chains" value="A=1-377"/>
</dbReference>
<dbReference type="PDB" id="2FV0">
    <property type="method" value="X-ray"/>
    <property type="resolution" value="1.91 A"/>
    <property type="chains" value="A/B=1-377"/>
</dbReference>
<dbReference type="PDB" id="2FV1">
    <property type="method" value="X-ray"/>
    <property type="resolution" value="1.73 A"/>
    <property type="chains" value="A/B=1-377"/>
</dbReference>
<dbReference type="PDBsum" id="1VD5"/>
<dbReference type="PDBsum" id="2AHF"/>
<dbReference type="PDBsum" id="2AHG"/>
<dbReference type="PDBsum" id="2D5J"/>
<dbReference type="PDBsum" id="2FUZ"/>
<dbReference type="PDBsum" id="2FV0"/>
<dbReference type="PDBsum" id="2FV1"/>
<dbReference type="SMR" id="Q9RC92"/>
<dbReference type="DrugBank" id="DB04447">
    <property type="generic name" value="1,4-Dithiothreitol"/>
</dbReference>
<dbReference type="CAZy" id="GH88">
    <property type="family name" value="Glycoside Hydrolase Family 88"/>
</dbReference>
<dbReference type="KEGG" id="ag:BAA84216"/>
<dbReference type="BioCyc" id="MetaCyc:MONOMER-16269"/>
<dbReference type="BRENDA" id="3.2.1.179">
    <property type="organism ID" value="691"/>
</dbReference>
<dbReference type="EvolutionaryTrace" id="Q9RC92"/>
<dbReference type="GO" id="GO:0005737">
    <property type="term" value="C:cytoplasm"/>
    <property type="evidence" value="ECO:0007669"/>
    <property type="project" value="UniProtKB-SubCell"/>
</dbReference>
<dbReference type="GO" id="GO:0052757">
    <property type="term" value="F:chondroitin hydrolase activity"/>
    <property type="evidence" value="ECO:0007669"/>
    <property type="project" value="TreeGrafter"/>
</dbReference>
<dbReference type="GO" id="GO:0000272">
    <property type="term" value="P:polysaccharide catabolic process"/>
    <property type="evidence" value="ECO:0007669"/>
    <property type="project" value="UniProtKB-KW"/>
</dbReference>
<dbReference type="Gene3D" id="1.50.10.10">
    <property type="match status" value="1"/>
</dbReference>
<dbReference type="InterPro" id="IPR008928">
    <property type="entry name" value="6-hairpin_glycosidase_sf"/>
</dbReference>
<dbReference type="InterPro" id="IPR012341">
    <property type="entry name" value="6hp_glycosidase-like_sf"/>
</dbReference>
<dbReference type="InterPro" id="IPR010905">
    <property type="entry name" value="Glyco_hydro_88"/>
</dbReference>
<dbReference type="InterPro" id="IPR052369">
    <property type="entry name" value="UG_Glycosaminoglycan_Hydrolase"/>
</dbReference>
<dbReference type="PANTHER" id="PTHR36845">
    <property type="entry name" value="HYDROLASE, PUTATIVE (AFU_ORTHOLOGUE AFUA_7G05090)-RELATED"/>
    <property type="match status" value="1"/>
</dbReference>
<dbReference type="PANTHER" id="PTHR36845:SF1">
    <property type="entry name" value="HYDROLASE, PUTATIVE (AFU_ORTHOLOGUE AFUA_7G05090)-RELATED"/>
    <property type="match status" value="1"/>
</dbReference>
<dbReference type="Pfam" id="PF07470">
    <property type="entry name" value="Glyco_hydro_88"/>
    <property type="match status" value="1"/>
</dbReference>
<dbReference type="SUPFAM" id="SSF48208">
    <property type="entry name" value="Six-hairpin glycosidases"/>
    <property type="match status" value="1"/>
</dbReference>
<reference key="1">
    <citation type="journal article" date="1999" name="Arch. Biochem. Biophys.">
        <title>Unsaturated glucuronyl hydrolase of Bacillus sp. GL1: novel enzyme prerequisite for metabolism of unsaturated oligosaccharides produced by polysaccharide lyases.</title>
        <authorList>
            <person name="Hashimoto W."/>
            <person name="Kobayashi E."/>
            <person name="Nankai H."/>
            <person name="Sato N."/>
            <person name="Miya T."/>
            <person name="Kawai S."/>
            <person name="Murata K."/>
        </authorList>
    </citation>
    <scope>NUCLEOTIDE SEQUENCE [GENOMIC DNA]</scope>
    <scope>PROTEIN SEQUENCE OF 1-25</scope>
    <scope>FUNCTION</scope>
    <scope>CATALYTIC ACTIVITY</scope>
    <scope>SUBUNIT</scope>
    <scope>SUBSTRATE SPECIFICITY</scope>
    <scope>BIOPHYSICOCHEMICAL PROPERTIES</scope>
</reference>
<reference key="2">
    <citation type="journal article" date="2011" name="J. Biol. Chem.">
        <title>Structural determinants in streptococcal unsaturated glucuronyl hydrolase for recognition of glycosaminoglycan sulfate groups.</title>
        <authorList>
            <person name="Nakamichi Y."/>
            <person name="Maruyama Y."/>
            <person name="Mikami B."/>
            <person name="Hashimoto W."/>
            <person name="Murata K."/>
        </authorList>
    </citation>
    <scope>FUNCTION</scope>
    <scope>CATALYTIC ACTIVITY</scope>
    <scope>BIOPHYSICOCHEMICAL PROPERTIES</scope>
    <scope>ACTIVE SITE</scope>
    <scope>MUTAGENESIS OF HIS-339; GLY-342 AND ILE-344</scope>
</reference>
<reference key="3">
    <citation type="journal article" date="2004" name="J. Biol. Chem.">
        <title>Crystal structure of unsaturated glucuronyl hydrolase, responsible for the degradation of glycosaminoglycan, from Bacillus sp. GL1 at 1.8 A resolution.</title>
        <authorList>
            <person name="Itoh T."/>
            <person name="Akao S."/>
            <person name="Hashimoto W."/>
            <person name="Mikami B."/>
            <person name="Murata K."/>
        </authorList>
    </citation>
    <scope>X-RAY CRYSTALLOGRAPHY (1.8 ANGSTROMS)</scope>
    <scope>MUTAGENESIS OF ASP-88 AND ASP-149</scope>
</reference>
<reference key="4">
    <citation type="journal article" date="2006" name="Biochem. Biophys. Res. Commun.">
        <title>Substrate recognition by unsaturated glucuronyl hydrolase from Bacillus sp. GL1.</title>
        <authorList>
            <person name="Itoh T."/>
            <person name="Hashimoto W."/>
            <person name="Mikami B."/>
            <person name="Murata K."/>
        </authorList>
    </citation>
    <scope>X-RAY CRYSTALLOGRAPHY (1.73 ANGSTROMS) OF APOENZYME AND IN COMPLEXES WITH SUBSTRATES</scope>
    <scope>REACTION MECHANISM</scope>
</reference>
<reference key="5">
    <citation type="journal article" date="2006" name="J. Biol. Chem.">
        <title>Crystal structure of unsaturated glucuronyl hydrolase complexed with substrate: molecular insights into its catalytic reaction mechanism.</title>
        <authorList>
            <person name="Itoh T."/>
            <person name="Hashimoto W."/>
            <person name="Mikami B."/>
            <person name="Murata K."/>
        </authorList>
    </citation>
    <scope>X-RAY CRYSTALLOGRAPHY (1.52 ANGSTROMS) OF WILD-TYPE AND MUTANT ASN-88 IN COMPLEX WITH SUBSTRATE</scope>
    <scope>MUTAGENESIS OF ASP-88</scope>
    <scope>REACTION MECHANISM</scope>
</reference>
<evidence type="ECO:0000269" key="1">
    <source>
    </source>
</evidence>
<evidence type="ECO:0000269" key="2">
    <source>
    </source>
</evidence>
<evidence type="ECO:0000269" key="3">
    <source>
    </source>
</evidence>
<evidence type="ECO:0000269" key="4">
    <source>
    </source>
</evidence>
<evidence type="ECO:0000305" key="5"/>
<evidence type="ECO:0007829" key="6">
    <source>
        <dbReference type="PDB" id="2AHF"/>
    </source>
</evidence>
<evidence type="ECO:0007829" key="7">
    <source>
        <dbReference type="PDB" id="2D5J"/>
    </source>
</evidence>
<evidence type="ECO:0007829" key="8">
    <source>
        <dbReference type="PDB" id="2FUZ"/>
    </source>
</evidence>
<feature type="chain" id="PRO_0000171596" description="Unsaturated glucuronyl hydrolase">
    <location>
        <begin position="1"/>
        <end position="377"/>
    </location>
</feature>
<feature type="active site" description="Nucleophile" evidence="4">
    <location>
        <position position="88"/>
    </location>
</feature>
<feature type="active site" description="Proton donor" evidence="4">
    <location>
        <position position="149"/>
    </location>
</feature>
<feature type="mutagenesis site" description="No activity, but no significant conformational change." evidence="2 3">
    <original>D</original>
    <variation>N</variation>
    <location>
        <position position="88"/>
    </location>
</feature>
<feature type="mutagenesis site" description="Large decrease in activity, but no significant conformational change." evidence="2">
    <original>D</original>
    <variation>N</variation>
    <location>
        <position position="149"/>
    </location>
</feature>
<feature type="mutagenesis site" description="Shows higher affinity for unsaturated chondroitin disaccharide sulfated at C-6 position of GalNAc residue (delta6S)." evidence="4">
    <original>H</original>
    <variation>S</variation>
    <location>
        <position position="339"/>
    </location>
</feature>
<feature type="mutagenesis site" description="Shows higher affinity for unsaturated chondroitin disaccharide sulfated at C-6 position of GalNAc residue (delta6S)." evidence="4">
    <original>G</original>
    <variation>S</variation>
    <location>
        <position position="342"/>
    </location>
</feature>
<feature type="mutagenesis site" description="Shows higher affinity for unsaturated chondroitin disaccharide sulfated at C-6 position of GalNAc residue (delta6S)." evidence="4">
    <original>I</original>
    <variation>K</variation>
    <location>
        <position position="344"/>
    </location>
</feature>
<feature type="helix" evidence="6">
    <location>
        <begin position="3"/>
        <end position="20"/>
    </location>
</feature>
<feature type="strand" evidence="6">
    <location>
        <begin position="24"/>
        <end position="39"/>
    </location>
</feature>
<feature type="helix" evidence="6">
    <location>
        <begin position="44"/>
        <end position="58"/>
    </location>
</feature>
<feature type="helix" evidence="6">
    <location>
        <begin position="61"/>
        <end position="78"/>
    </location>
</feature>
<feature type="turn" evidence="6">
    <location>
        <begin position="79"/>
        <end position="83"/>
    </location>
</feature>
<feature type="strand" evidence="7">
    <location>
        <begin position="85"/>
        <end position="87"/>
    </location>
</feature>
<feature type="helix" evidence="6">
    <location>
        <begin position="89"/>
        <end position="94"/>
    </location>
</feature>
<feature type="helix" evidence="6">
    <location>
        <begin position="97"/>
        <end position="104"/>
    </location>
</feature>
<feature type="helix" evidence="6">
    <location>
        <begin position="107"/>
        <end position="121"/>
    </location>
</feature>
<feature type="turn" evidence="6">
    <location>
        <begin position="126"/>
        <end position="129"/>
    </location>
</feature>
<feature type="strand" evidence="6">
    <location>
        <begin position="134"/>
        <end position="136"/>
    </location>
</feature>
<feature type="turn" evidence="6">
    <location>
        <begin position="140"/>
        <end position="144"/>
    </location>
</feature>
<feature type="strand" evidence="6">
    <location>
        <begin position="145"/>
        <end position="147"/>
    </location>
</feature>
<feature type="helix" evidence="6">
    <location>
        <begin position="148"/>
        <end position="153"/>
    </location>
</feature>
<feature type="helix" evidence="6">
    <location>
        <begin position="154"/>
        <end position="164"/>
    </location>
</feature>
<feature type="helix" evidence="6">
    <location>
        <begin position="168"/>
        <end position="183"/>
    </location>
</feature>
<feature type="strand" evidence="6">
    <location>
        <begin position="193"/>
        <end position="197"/>
    </location>
</feature>
<feature type="turn" evidence="6">
    <location>
        <begin position="199"/>
        <end position="201"/>
    </location>
</feature>
<feature type="strand" evidence="6">
    <location>
        <begin position="204"/>
        <end position="208"/>
    </location>
</feature>
<feature type="strand" evidence="6">
    <location>
        <begin position="210"/>
        <end position="214"/>
    </location>
</feature>
<feature type="helix" evidence="6">
    <location>
        <begin position="220"/>
        <end position="237"/>
    </location>
</feature>
<feature type="helix" evidence="6">
    <location>
        <begin position="240"/>
        <end position="254"/>
    </location>
</feature>
<feature type="strand" evidence="6">
    <location>
        <begin position="264"/>
        <end position="266"/>
    </location>
</feature>
<feature type="helix" evidence="6">
    <location>
        <begin position="279"/>
        <end position="294"/>
    </location>
</feature>
<feature type="helix" evidence="6">
    <location>
        <begin position="301"/>
        <end position="320"/>
    </location>
</feature>
<feature type="strand" evidence="6">
    <location>
        <begin position="332"/>
        <end position="334"/>
    </location>
</feature>
<feature type="turn" evidence="6">
    <location>
        <begin position="340"/>
        <end position="343"/>
    </location>
</feature>
<feature type="strand" evidence="6">
    <location>
        <begin position="344"/>
        <end position="348"/>
    </location>
</feature>
<feature type="helix" evidence="6">
    <location>
        <begin position="351"/>
        <end position="366"/>
    </location>
</feature>
<feature type="strand" evidence="8">
    <location>
        <begin position="371"/>
        <end position="373"/>
    </location>
</feature>
<sequence>MWQQAIGDALGITARNLKKFGDRFPHVSDGSNKYVLNDNTDWTDGFWSGILWLCYEYTGDEQYREGAVRTVASFRERLDRFENLDHHDIGFLYSLSAKAQWIVEKDESARKLALDAADVLMRRWRADAGIIQAWGPKGDPENGGRIIIDCLLNLPLLLWAGEQTGDPEYRRVAEAHALKSRRFLVRGDDSSYHTFYFDPENGNAIRGGTHQGNTDGSTWTRGQAWGIYGFALNSRYLGNADLLETAKRMARHFLARVPEDGVVYWDFEVPQEPSSYRDSSASAITACGLLEIASQLDESDPERQRFIDAAKTTVTALRDGYAERDDGEAEGFIRRGSYHVRGGISPDDYTIWGDYYYLEALLRLERGVTGYWYERGR</sequence>
<protein>
    <recommendedName>
        <fullName>Unsaturated glucuronyl hydrolase</fullName>
        <shortName>UGL</shortName>
        <ecNumber evidence="1 4">3.2.1.179</ecNumber>
    </recommendedName>
    <alternativeName>
        <fullName>Glycosaminoglycan hydrolase</fullName>
    </alternativeName>
    <alternativeName>
        <fullName>Glycuronidase</fullName>
    </alternativeName>
    <alternativeName>
        <fullName>Unsaturated uronic acid hydrolase</fullName>
    </alternativeName>
</protein>
<accession>Q9RC92</accession>
<organism>
    <name type="scientific">Bacillus sp. (strain GL1)</name>
    <dbReference type="NCBI Taxonomy" id="84635"/>
    <lineage>
        <taxon>Bacteria</taxon>
        <taxon>Bacillati</taxon>
        <taxon>Bacillota</taxon>
        <taxon>Bacilli</taxon>
        <taxon>Bacillales</taxon>
        <taxon>Bacillaceae</taxon>
        <taxon>Bacillus</taxon>
    </lineage>
</organism>
<keyword id="KW-0002">3D-structure</keyword>
<keyword id="KW-0119">Carbohydrate metabolism</keyword>
<keyword id="KW-0963">Cytoplasm</keyword>
<keyword id="KW-0903">Direct protein sequencing</keyword>
<keyword id="KW-0326">Glycosidase</keyword>
<keyword id="KW-0378">Hydrolase</keyword>
<keyword id="KW-0624">Polysaccharide degradation</keyword>
<comment type="function">
    <text evidence="1 4">Catalyzes the hydrolysis of oligosaccharides with unsaturated glucuronyl residues at the non-reducing terminal, to a sugar or an amino sugar, and an unsaturated D-glucuronic acid (GlcA), which is nonenzymatically converted immediately to alpha-keto acid.</text>
</comment>
<comment type="catalytic activity">
    <reaction evidence="1 4">
        <text>beta-D-Delta(4)-GlcA-(1-&gt;4)-beta-D-Glc-(1-&gt;4)-alpha-L-Rha-(1-&gt;3)-D-Glc + H2O = beta-D-Glc-(1-&gt;4)-alpha-L-Rha-(1-&gt;3)-D-Glc + 5-dehydro-4-deoxy-D-glucuronate</text>
        <dbReference type="Rhea" id="RHEA:31635"/>
        <dbReference type="ChEBI" id="CHEBI:15377"/>
        <dbReference type="ChEBI" id="CHEBI:17117"/>
        <dbReference type="ChEBI" id="CHEBI:134389"/>
        <dbReference type="ChEBI" id="CHEBI:134390"/>
        <dbReference type="EC" id="3.2.1.179"/>
    </reaction>
</comment>
<comment type="activity regulation">
    <text>Partially inhibited by divalent metal ions such as calcium, copper, iron and mercury.</text>
</comment>
<comment type="biophysicochemical properties">
    <kinetics>
        <KM evidence="1 4">0.381 mM for unsaturated chondroitin disaccharidee (delta0S)</KM>
        <KM evidence="1 4">18.6 mM for unsaturated chondroitin disaccharide sulfated at C-6 position of GalNAc residue (delta6S)</KM>
        <KM evidence="1 4">90 uM for gellan lyase product (at 30 degrees Celsius and pH 6.5)</KM>
        <KM evidence="1 4">200 uM for chondroitin lyase product (at 30 degrees Celsius and pH 6.5)</KM>
        <KM evidence="1 4">226 uM for hyaluronate lyase product (at 30 degrees Celsius and pH 6.5)</KM>
        <text evidence="4">kcat is 14.1 sec(-1) with unsaturated chondroitin (delta0S). kcat is 54.9 sec(-1) with unsaturated chondroitin disaccharide sulfated at C-6 position of GalNAc residue (delta6S).</text>
    </kinetics>
    <phDependence>
        <text evidence="1 4">Optimum pH is 6.0-6.5.</text>
    </phDependence>
    <temperatureDependence>
        <text evidence="1 4">Optimum temperature is 45 degrees Celsius.</text>
    </temperatureDependence>
</comment>
<comment type="subunit">
    <text evidence="1 3">Monomer.</text>
</comment>
<comment type="subcellular location">
    <subcellularLocation>
        <location>Cytoplasm</location>
    </subcellularLocation>
</comment>
<comment type="similarity">
    <text evidence="5">Belongs to the glycosyl hydrolase 88 family.</text>
</comment>